<protein>
    <recommendedName>
        <fullName>Acetolactate synthase, chloroplastic</fullName>
        <shortName>AtALS</shortName>
        <ecNumber>2.2.1.6</ecNumber>
    </recommendedName>
    <alternativeName>
        <fullName>Acetohydroxy-acid synthase</fullName>
    </alternativeName>
    <alternativeName>
        <fullName>Protein CHLORSULFURON RESISTANT 1</fullName>
    </alternativeName>
</protein>
<organism>
    <name type="scientific">Arabidopsis thaliana</name>
    <name type="common">Mouse-ear cress</name>
    <dbReference type="NCBI Taxonomy" id="3702"/>
    <lineage>
        <taxon>Eukaryota</taxon>
        <taxon>Viridiplantae</taxon>
        <taxon>Streptophyta</taxon>
        <taxon>Embryophyta</taxon>
        <taxon>Tracheophyta</taxon>
        <taxon>Spermatophyta</taxon>
        <taxon>Magnoliopsida</taxon>
        <taxon>eudicotyledons</taxon>
        <taxon>Gunneridae</taxon>
        <taxon>Pentapetalae</taxon>
        <taxon>rosids</taxon>
        <taxon>malvids</taxon>
        <taxon>Brassicales</taxon>
        <taxon>Brassicaceae</taxon>
        <taxon>Camelineae</taxon>
        <taxon>Arabidopsis</taxon>
    </lineage>
</organism>
<keyword id="KW-0002">3D-structure</keyword>
<keyword id="KW-0028">Amino-acid biosynthesis</keyword>
<keyword id="KW-0100">Branched-chain amino acid biosynthesis</keyword>
<keyword id="KW-0150">Chloroplast</keyword>
<keyword id="KW-0175">Coiled coil</keyword>
<keyword id="KW-0274">FAD</keyword>
<keyword id="KW-0285">Flavoprotein</keyword>
<keyword id="KW-0308">Genetically modified food</keyword>
<keyword id="KW-0359">Herbicide resistance</keyword>
<keyword id="KW-0460">Magnesium</keyword>
<keyword id="KW-0479">Metal-binding</keyword>
<keyword id="KW-0558">Oxidation</keyword>
<keyword id="KW-0934">Plastid</keyword>
<keyword id="KW-1185">Reference proteome</keyword>
<keyword id="KW-0786">Thiamine pyrophosphate</keyword>
<keyword id="KW-0808">Transferase</keyword>
<keyword id="KW-0809">Transit peptide</keyword>
<reference key="1">
    <citation type="journal article" date="1987" name="Plant Physiol.">
        <title>Isolation and characterization of plant genes coding for acetolactate synthase, the target enzyme for two classes of herbicides.</title>
        <authorList>
            <person name="Mazur B.J."/>
            <person name="Chui C.F."/>
            <person name="Smith J.K."/>
        </authorList>
    </citation>
    <scope>NUCLEOTIDE SEQUENCE [GENOMIC DNA]</scope>
    <scope>FUNCTION</scope>
</reference>
<reference key="2">
    <citation type="journal article" date="1990" name="Nucleic Acids Res.">
        <title>Nucleotide sequence of a mutant acetolactate synthase gene from an imidazolinone-resistant Arabidopsis thaliana var. Columbia.</title>
        <authorList>
            <person name="Sathasivan K."/>
            <person name="Haughn G.W."/>
            <person name="Murai N."/>
        </authorList>
    </citation>
    <scope>NUCLEOTIDE SEQUENCE [GENOMIC DNA]</scope>
    <scope>MUTAGENESIS OF SER-653</scope>
    <scope>FUNCTION</scope>
    <source>
        <strain>cv. Columbia</strain>
    </source>
</reference>
<reference key="3">
    <citation type="journal article" date="2000" name="Nature">
        <title>Sequence and analysis of chromosome 3 of the plant Arabidopsis thaliana.</title>
        <authorList>
            <person name="Salanoubat M."/>
            <person name="Lemcke K."/>
            <person name="Rieger M."/>
            <person name="Ansorge W."/>
            <person name="Unseld M."/>
            <person name="Fartmann B."/>
            <person name="Valle G."/>
            <person name="Bloecker H."/>
            <person name="Perez-Alonso M."/>
            <person name="Obermaier B."/>
            <person name="Delseny M."/>
            <person name="Boutry M."/>
            <person name="Grivell L.A."/>
            <person name="Mache R."/>
            <person name="Puigdomenech P."/>
            <person name="De Simone V."/>
            <person name="Choisne N."/>
            <person name="Artiguenave F."/>
            <person name="Robert C."/>
            <person name="Brottier P."/>
            <person name="Wincker P."/>
            <person name="Cattolico L."/>
            <person name="Weissenbach J."/>
            <person name="Saurin W."/>
            <person name="Quetier F."/>
            <person name="Schaefer M."/>
            <person name="Mueller-Auer S."/>
            <person name="Gabel C."/>
            <person name="Fuchs M."/>
            <person name="Benes V."/>
            <person name="Wurmbach E."/>
            <person name="Drzonek H."/>
            <person name="Erfle H."/>
            <person name="Jordan N."/>
            <person name="Bangert S."/>
            <person name="Wiedelmann R."/>
            <person name="Kranz H."/>
            <person name="Voss H."/>
            <person name="Holland R."/>
            <person name="Brandt P."/>
            <person name="Nyakatura G."/>
            <person name="Vezzi A."/>
            <person name="D'Angelo M."/>
            <person name="Pallavicini A."/>
            <person name="Toppo S."/>
            <person name="Simionati B."/>
            <person name="Conrad A."/>
            <person name="Hornischer K."/>
            <person name="Kauer G."/>
            <person name="Loehnert T.-H."/>
            <person name="Nordsiek G."/>
            <person name="Reichelt J."/>
            <person name="Scharfe M."/>
            <person name="Schoen O."/>
            <person name="Bargues M."/>
            <person name="Terol J."/>
            <person name="Climent J."/>
            <person name="Navarro P."/>
            <person name="Collado C."/>
            <person name="Perez-Perez A."/>
            <person name="Ottenwaelder B."/>
            <person name="Duchemin D."/>
            <person name="Cooke R."/>
            <person name="Laudie M."/>
            <person name="Berger-Llauro C."/>
            <person name="Purnelle B."/>
            <person name="Masuy D."/>
            <person name="de Haan M."/>
            <person name="Maarse A.C."/>
            <person name="Alcaraz J.-P."/>
            <person name="Cottet A."/>
            <person name="Casacuberta E."/>
            <person name="Monfort A."/>
            <person name="Argiriou A."/>
            <person name="Flores M."/>
            <person name="Liguori R."/>
            <person name="Vitale D."/>
            <person name="Mannhaupt G."/>
            <person name="Haase D."/>
            <person name="Schoof H."/>
            <person name="Rudd S."/>
            <person name="Zaccaria P."/>
            <person name="Mewes H.-W."/>
            <person name="Mayer K.F.X."/>
            <person name="Kaul S."/>
            <person name="Town C.D."/>
            <person name="Koo H.L."/>
            <person name="Tallon L.J."/>
            <person name="Jenkins J."/>
            <person name="Rooney T."/>
            <person name="Rizzo M."/>
            <person name="Walts A."/>
            <person name="Utterback T."/>
            <person name="Fujii C.Y."/>
            <person name="Shea T.P."/>
            <person name="Creasy T.H."/>
            <person name="Haas B."/>
            <person name="Maiti R."/>
            <person name="Wu D."/>
            <person name="Peterson J."/>
            <person name="Van Aken S."/>
            <person name="Pai G."/>
            <person name="Militscher J."/>
            <person name="Sellers P."/>
            <person name="Gill J.E."/>
            <person name="Feldblyum T.V."/>
            <person name="Preuss D."/>
            <person name="Lin X."/>
            <person name="Nierman W.C."/>
            <person name="Salzberg S.L."/>
            <person name="White O."/>
            <person name="Venter J.C."/>
            <person name="Fraser C.M."/>
            <person name="Kaneko T."/>
            <person name="Nakamura Y."/>
            <person name="Sato S."/>
            <person name="Kato T."/>
            <person name="Asamizu E."/>
            <person name="Sasamoto S."/>
            <person name="Kimura T."/>
            <person name="Idesawa K."/>
            <person name="Kawashima K."/>
            <person name="Kishida Y."/>
            <person name="Kiyokawa C."/>
            <person name="Kohara M."/>
            <person name="Matsumoto M."/>
            <person name="Matsuno A."/>
            <person name="Muraki A."/>
            <person name="Nakayama S."/>
            <person name="Nakazaki N."/>
            <person name="Shinpo S."/>
            <person name="Takeuchi C."/>
            <person name="Wada T."/>
            <person name="Watanabe A."/>
            <person name="Yamada M."/>
            <person name="Yasuda M."/>
            <person name="Tabata S."/>
        </authorList>
    </citation>
    <scope>NUCLEOTIDE SEQUENCE [LARGE SCALE GENOMIC DNA]</scope>
    <source>
        <strain>cv. Columbia</strain>
    </source>
</reference>
<reference key="4">
    <citation type="journal article" date="2017" name="Plant J.">
        <title>Araport11: a complete reannotation of the Arabidopsis thaliana reference genome.</title>
        <authorList>
            <person name="Cheng C.Y."/>
            <person name="Krishnakumar V."/>
            <person name="Chan A.P."/>
            <person name="Thibaud-Nissen F."/>
            <person name="Schobel S."/>
            <person name="Town C.D."/>
        </authorList>
    </citation>
    <scope>GENOME REANNOTATION</scope>
    <source>
        <strain>cv. Columbia</strain>
    </source>
</reference>
<reference key="5">
    <citation type="submission" date="2002-06" db="EMBL/GenBank/DDBJ databases">
        <title>Saturation mutagenesis in Arabidopsis to determine frequency of herbicide resistance.</title>
        <authorList>
            <person name="Jander G."/>
            <person name="Baerson S.R."/>
            <person name="Hudak J.A."/>
            <person name="Gonzalez K.A."/>
            <person name="Gruys K.J."/>
            <person name="Last R.L."/>
        </authorList>
    </citation>
    <scope>NUCLEOTIDE SEQUENCE [GENOMIC DNA]</scope>
    <source>
        <strain>cv. Landsberg erecta</strain>
    </source>
</reference>
<reference key="6">
    <citation type="journal article" date="2003" name="Science">
        <title>Empirical analysis of transcriptional activity in the Arabidopsis genome.</title>
        <authorList>
            <person name="Yamada K."/>
            <person name="Lim J."/>
            <person name="Dale J.M."/>
            <person name="Chen H."/>
            <person name="Shinn P."/>
            <person name="Palm C.J."/>
            <person name="Southwick A.M."/>
            <person name="Wu H.C."/>
            <person name="Kim C.J."/>
            <person name="Nguyen M."/>
            <person name="Pham P.K."/>
            <person name="Cheuk R.F."/>
            <person name="Karlin-Newmann G."/>
            <person name="Liu S.X."/>
            <person name="Lam B."/>
            <person name="Sakano H."/>
            <person name="Wu T."/>
            <person name="Yu G."/>
            <person name="Miranda M."/>
            <person name="Quach H.L."/>
            <person name="Tripp M."/>
            <person name="Chang C.H."/>
            <person name="Lee J.M."/>
            <person name="Toriumi M.J."/>
            <person name="Chan M.M."/>
            <person name="Tang C.C."/>
            <person name="Onodera C.S."/>
            <person name="Deng J.M."/>
            <person name="Akiyama K."/>
            <person name="Ansari Y."/>
            <person name="Arakawa T."/>
            <person name="Banh J."/>
            <person name="Banno F."/>
            <person name="Bowser L."/>
            <person name="Brooks S.Y."/>
            <person name="Carninci P."/>
            <person name="Chao Q."/>
            <person name="Choy N."/>
            <person name="Enju A."/>
            <person name="Goldsmith A.D."/>
            <person name="Gurjal M."/>
            <person name="Hansen N.F."/>
            <person name="Hayashizaki Y."/>
            <person name="Johnson-Hopson C."/>
            <person name="Hsuan V.W."/>
            <person name="Iida K."/>
            <person name="Karnes M."/>
            <person name="Khan S."/>
            <person name="Koesema E."/>
            <person name="Ishida J."/>
            <person name="Jiang P.X."/>
            <person name="Jones T."/>
            <person name="Kawai J."/>
            <person name="Kamiya A."/>
            <person name="Meyers C."/>
            <person name="Nakajima M."/>
            <person name="Narusaka M."/>
            <person name="Seki M."/>
            <person name="Sakurai T."/>
            <person name="Satou M."/>
            <person name="Tamse R."/>
            <person name="Vaysberg M."/>
            <person name="Wallender E.K."/>
            <person name="Wong C."/>
            <person name="Yamamura Y."/>
            <person name="Yuan S."/>
            <person name="Shinozaki K."/>
            <person name="Davis R.W."/>
            <person name="Theologis A."/>
            <person name="Ecker J.R."/>
        </authorList>
    </citation>
    <scope>NUCLEOTIDE SEQUENCE [LARGE SCALE MRNA]</scope>
    <source>
        <strain>cv. Columbia</strain>
    </source>
</reference>
<reference key="7">
    <citation type="submission" date="2005-01" db="EMBL/GenBank/DDBJ databases">
        <title>Arabidopsis ORF clones.</title>
        <authorList>
            <person name="Cheuk R.F."/>
            <person name="Chen H."/>
            <person name="Kim C.J."/>
            <person name="Shinn P."/>
            <person name="Ecker J.R."/>
        </authorList>
    </citation>
    <scope>NUCLEOTIDE SEQUENCE [LARGE SCALE MRNA]</scope>
    <source>
        <strain>cv. Columbia</strain>
    </source>
</reference>
<reference key="8">
    <citation type="submission" date="2006-09" db="EMBL/GenBank/DDBJ databases">
        <title>Cloning of Arabidopsis thaliana acetolactate synthase catalytic subunit.</title>
        <authorList>
            <person name="Jiang L."/>
            <person name="Xiang W."/>
            <person name="Wang X."/>
            <person name="Wang X."/>
            <person name="Zhang J."/>
            <person name="Xi D."/>
            <person name="Gao A."/>
        </authorList>
    </citation>
    <scope>NUCLEOTIDE SEQUENCE [MRNA]</scope>
</reference>
<reference key="9">
    <citation type="journal article" date="1988" name="Mol. Gen. Genet.">
        <title>Transformation with a mutant Arabidopsis acetolactate synthase gene renders tobacco resistant to sulfonylurea herbicides.</title>
        <authorList>
            <person name="Haughn G.W."/>
            <person name="Smith J.K."/>
            <person name="Mazur B.J."/>
            <person name="Somerville C."/>
        </authorList>
    </citation>
    <scope>FUNCTION</scope>
    <scope>MUTAGENESIS OF PRO-197</scope>
    <source>
        <strain>cv. Columbia</strain>
    </source>
</reference>
<reference key="10">
    <citation type="journal article" date="1990" name="Plant Physiol.">
        <title>A mutation causing imidazolinone resistance maps to the csr1 locus of Arabidopsis thaliana.</title>
        <authorList>
            <person name="Haughn G.W."/>
            <person name="Somerville C.R."/>
        </authorList>
    </citation>
    <scope>FUNCTION</scope>
</reference>
<reference key="11">
    <citation type="journal article" date="1991" name="Plant Physiol.">
        <title>Molecular basis of imidazolinone herbicide resistance in Arabidopsis thaliana var Columbia.</title>
        <authorList>
            <person name="Sathasivan K."/>
            <person name="Haughn G.W."/>
            <person name="Murai N."/>
        </authorList>
    </citation>
    <scope>FUNCTION</scope>
    <scope>MUTAGENESIS OF SER-653</scope>
    <source>
        <strain>cv. Columbia</strain>
    </source>
</reference>
<reference key="12">
    <citation type="journal article" date="1996" name="J. Mol. Biol.">
        <title>Rational molecular design and genetic engineering of herbicide resistant crops by structure modeling and site-directed mutagenesis of acetohydroxyacid synthase.</title>
        <authorList>
            <person name="Ott K.H."/>
            <person name="Kwagh J.G."/>
            <person name="Stockton G.W."/>
            <person name="Sidorov V."/>
            <person name="Kakefuda G."/>
        </authorList>
    </citation>
    <scope>3D-STRUCTURE MODELING</scope>
    <scope>FUNCTION</scope>
    <scope>MUTAGENESIS OF MET-124 AND ARG-199</scope>
</reference>
<reference key="13">
    <citation type="journal article" date="1997" name="Biochem. J.">
        <title>Expression, purification and characterization of Arabidopsis thaliana acetohydroxyacid synthase.</title>
        <authorList>
            <person name="Chang A.K."/>
            <person name="Duggleby R.G."/>
        </authorList>
    </citation>
    <scope>FUNCTION</scope>
    <scope>BIOPHYSICOCHEMICAL PROPERTIES</scope>
    <scope>COFACTOR</scope>
    <scope>ACTIVITY REGULATION</scope>
    <scope>SUBUNIT</scope>
</reference>
<reference key="14">
    <citation type="journal article" date="1998" name="Biochem. J.">
        <title>Herbicide-resistant forms of Arabidopsis thaliana acetohydroxyacid synthase: characterization of the catalytic properties and sensitivity to inhibitors of four defined mutants.</title>
        <authorList>
            <person name="Chang A.K."/>
            <person name="Duggleby R.G."/>
        </authorList>
    </citation>
    <scope>FUNCTION</scope>
    <scope>BIOPHYSICOCHEMICAL PROPERTIES</scope>
    <scope>COFACTOR</scope>
    <scope>MUTAGENESIS OF ALA-122; TRP-574 AND SER-653</scope>
</reference>
<reference key="15">
    <citation type="journal article" date="1999" name="FEBS Lett.">
        <title>Effect of mutagenesis at serine 653 of Arabidopsis thaliana acetohydroxyacid synthase on the sensitivity to imidazolinone and sulfonylurea herbicides.</title>
        <authorList>
            <person name="Lee Y.T."/>
            <person name="Chang A.K."/>
            <person name="Duggleby R.G."/>
        </authorList>
    </citation>
    <scope>FUNCTION</scope>
    <scope>MUTAGENESIS OF SER-653</scope>
</reference>
<reference key="16">
    <citation type="journal article" date="2009" name="Bioorg. Med. Chem.">
        <title>Design and synthesis of N-2,6-difluorophenyl-5-methoxyl-1,2,4-triazolo[1,5-a]-pyrimidine-2-sulfonamide as acetohydroxyacid synthase inhibitor.</title>
        <authorList>
            <person name="Chen C.N."/>
            <person name="Lv L.L."/>
            <person name="Ji F.Q."/>
            <person name="Chen Q."/>
            <person name="Xu H."/>
            <person name="Niu C.W."/>
            <person name="Xi Z."/>
            <person name="Yang G.F."/>
        </authorList>
    </citation>
    <scope>3D-STRUCTURE MODELING</scope>
    <scope>ACTIVITY REGULATION</scope>
</reference>
<reference key="17">
    <citation type="journal article" date="2010" name="Bioorg. Med. Chem.">
        <title>Syntheses and herbicidal activity of new triazolopyrimidine-2-sulfonamides as acetohydroxyacid synthase inhibitor.</title>
        <authorList>
            <person name="Chen C.N."/>
            <person name="Chen Q."/>
            <person name="Liu Y.C."/>
            <person name="Zhu X.L."/>
            <person name="Niu C.W."/>
            <person name="Xi Z."/>
            <person name="Yang G.F."/>
        </authorList>
    </citation>
    <scope>3D-STRUCTURE MODELING</scope>
    <scope>ACTIVITY REGULATION</scope>
</reference>
<reference key="18">
    <citation type="journal article" date="2011" name="J. Agric. Food Chem.">
        <title>Chemical synthesis, in vitro acetohydroxyacid synthase (AHAS) inhibition, herbicidal activity, and computational studies of isatin derivatives.</title>
        <authorList>
            <person name="Wang J."/>
            <person name="Tan H."/>
            <person name="Li Y."/>
            <person name="Ma Y."/>
            <person name="Li Z."/>
            <person name="Guddat L.W."/>
        </authorList>
    </citation>
    <scope>3D-STRUCTURE MODELING</scope>
    <scope>ACTIVITY REGULATION</scope>
</reference>
<reference key="19">
    <citation type="journal article" date="2012" name="J. Agric. Food Chem.">
        <title>Synthesis, crystal structure, in vitro acetohydroxyacid synthase inhibition, in vivo herbicidal activity, and 3D-QSAR of new asymmetric aryl disulfides.</title>
        <authorList>
            <person name="Shang J."/>
            <person name="Wang W.M."/>
            <person name="Li Y.H."/>
            <person name="Song H.B."/>
            <person name="Li Z.M."/>
            <person name="Wang J.G."/>
        </authorList>
    </citation>
    <scope>3D-STRUCTURE MODELING</scope>
    <scope>ACTIVITY REGULATION</scope>
</reference>
<reference key="20">
    <citation type="journal article" date="2012" name="Transgenic Res.">
        <title>Comparability of imazapyr-resistant Arabidopsis created by transgenesis and mutagenesis.</title>
        <authorList>
            <person name="Schnell J."/>
            <person name="Labbe H."/>
            <person name="Kovinich N."/>
            <person name="Manabe Y."/>
            <person name="Miki B."/>
        </authorList>
    </citation>
    <scope>DISRUPTION PHENOTYPE</scope>
</reference>
<reference evidence="21 22 23 24 25 26" key="21">
    <citation type="journal article" date="2006" name="Proc. Natl. Acad. Sci. U.S.A.">
        <title>Herbicide-binding sites revealed in the structure of plant acetohydroxyacid synthase.</title>
        <authorList>
            <person name="McCourt J.A."/>
            <person name="Pang S.S."/>
            <person name="King-Scott J."/>
            <person name="Guddat L.W."/>
            <person name="Duggleby R.G."/>
        </authorList>
    </citation>
    <scope>X-RAY CRYSTALLOGRAPHY (2.50 ANGSTROMS) OF 86-667 IN COMPLEX WITH FAD; MAGNESIUM; THIAMINE PYROPHOSPHATE AND HERBICIDES</scope>
    <scope>OXIDATION AT CYS-340</scope>
    <scope>SUBUNIT</scope>
</reference>
<reference evidence="27 28" key="22">
    <citation type="journal article" date="2009" name="FEBS J.">
        <title>Crystal structures of two novel sulfonylurea herbicides in complex with Arabidopsis thaliana acetohydroxyacid synthase.</title>
        <authorList>
            <person name="Wang J.G."/>
            <person name="Lee P.K."/>
            <person name="Dong Y.H."/>
            <person name="Pang S.S."/>
            <person name="Duggleby R.G."/>
            <person name="Li Z.M."/>
            <person name="Guddat L.W."/>
        </authorList>
    </citation>
    <scope>X-RAY CRYSTALLOGRAPHY (2.80 ANGSTROMS) OF 87-670 IN COMPLEX WITH MAGNESIUM AND SULFONYLUREA HERBICIDES</scope>
    <scope>OXIDATION AT CYS-340</scope>
</reference>
<reference key="23">
    <citation type="journal article" date="2020" name="Nature">
        <title>Structures of fungal and plant acetohydroxyacid synthases.</title>
        <authorList>
            <person name="Lonhienne T."/>
            <person name="Low Y.S."/>
            <person name="Garcia M.D."/>
            <person name="Croll T."/>
            <person name="Gao Y."/>
            <person name="Wang Q."/>
            <person name="Brillault L."/>
            <person name="Williams C.M."/>
            <person name="Fraser J.A."/>
            <person name="McGeary R.P."/>
            <person name="West N.P."/>
            <person name="Landsberg M.J."/>
            <person name="Rao Z."/>
            <person name="Schenk G."/>
            <person name="Guddat L.W."/>
        </authorList>
    </citation>
    <scope>STRUCTURE BY ELECTRON MICROSCOPY (3.45 ANGSTROMS) IN COMPLEX WITH FAD; THIAMINE DIPHOSPHATE AND MAGNESIUM</scope>
    <scope>SUBUNIT</scope>
</reference>
<dbReference type="EC" id="2.2.1.6"/>
<dbReference type="EMBL" id="X51514">
    <property type="protein sequence ID" value="CAA35887.1"/>
    <property type="molecule type" value="Genomic_DNA"/>
</dbReference>
<dbReference type="EMBL" id="AL133315">
    <property type="protein sequence ID" value="CAB62345.1"/>
    <property type="molecule type" value="Genomic_DNA"/>
</dbReference>
<dbReference type="EMBL" id="CP002686">
    <property type="protein sequence ID" value="AEE78430.1"/>
    <property type="molecule type" value="Genomic_DNA"/>
</dbReference>
<dbReference type="EMBL" id="AY124092">
    <property type="protein sequence ID" value="AAM92569.1"/>
    <property type="molecule type" value="Genomic_DNA"/>
</dbReference>
<dbReference type="EMBL" id="AY042819">
    <property type="protein sequence ID" value="AAK68759.1"/>
    <property type="molecule type" value="mRNA"/>
</dbReference>
<dbReference type="EMBL" id="BT020540">
    <property type="protein sequence ID" value="AAW70386.1"/>
    <property type="molecule type" value="mRNA"/>
</dbReference>
<dbReference type="EMBL" id="DQ991161">
    <property type="protein sequence ID" value="ABJ80681.1"/>
    <property type="molecule type" value="mRNA"/>
</dbReference>
<dbReference type="PIR" id="S09502">
    <property type="entry name" value="YCMU"/>
</dbReference>
<dbReference type="RefSeq" id="NP_190425.1">
    <property type="nucleotide sequence ID" value="NM_114714.3"/>
</dbReference>
<dbReference type="PDB" id="1YBH">
    <property type="method" value="X-ray"/>
    <property type="resolution" value="2.50 A"/>
    <property type="chains" value="A=86-667"/>
</dbReference>
<dbReference type="PDB" id="1YHY">
    <property type="method" value="X-ray"/>
    <property type="resolution" value="2.70 A"/>
    <property type="chains" value="A=86-667"/>
</dbReference>
<dbReference type="PDB" id="1YHZ">
    <property type="method" value="X-ray"/>
    <property type="resolution" value="2.70 A"/>
    <property type="chains" value="A=86-667"/>
</dbReference>
<dbReference type="PDB" id="1YI0">
    <property type="method" value="X-ray"/>
    <property type="resolution" value="2.70 A"/>
    <property type="chains" value="A=86-667"/>
</dbReference>
<dbReference type="PDB" id="1YI1">
    <property type="method" value="X-ray"/>
    <property type="resolution" value="2.90 A"/>
    <property type="chains" value="A=86-667"/>
</dbReference>
<dbReference type="PDB" id="1Z8N">
    <property type="method" value="X-ray"/>
    <property type="resolution" value="2.80 A"/>
    <property type="chains" value="A=86-667"/>
</dbReference>
<dbReference type="PDB" id="3E9Y">
    <property type="method" value="X-ray"/>
    <property type="resolution" value="3.00 A"/>
    <property type="chains" value="A=87-670"/>
</dbReference>
<dbReference type="PDB" id="3EA4">
    <property type="method" value="X-ray"/>
    <property type="resolution" value="2.80 A"/>
    <property type="chains" value="A=87-670"/>
</dbReference>
<dbReference type="PDB" id="5K2O">
    <property type="method" value="X-ray"/>
    <property type="resolution" value="2.87 A"/>
    <property type="chains" value="A=86-667"/>
</dbReference>
<dbReference type="PDB" id="5K3S">
    <property type="method" value="X-ray"/>
    <property type="resolution" value="2.87 A"/>
    <property type="chains" value="A=86-667"/>
</dbReference>
<dbReference type="PDB" id="5K6Q">
    <property type="method" value="X-ray"/>
    <property type="resolution" value="2.95 A"/>
    <property type="chains" value="A=86-667"/>
</dbReference>
<dbReference type="PDB" id="5K6R">
    <property type="method" value="X-ray"/>
    <property type="resolution" value="2.73 A"/>
    <property type="chains" value="A=86-667"/>
</dbReference>
<dbReference type="PDB" id="5K6T">
    <property type="method" value="X-ray"/>
    <property type="resolution" value="2.76 A"/>
    <property type="chains" value="A=86-667"/>
</dbReference>
<dbReference type="PDB" id="5WJ1">
    <property type="method" value="X-ray"/>
    <property type="resolution" value="2.52 A"/>
    <property type="chains" value="A=86-667"/>
</dbReference>
<dbReference type="PDB" id="6U9H">
    <property type="method" value="EM"/>
    <property type="resolution" value="3.80 A"/>
    <property type="chains" value="A/B/H/I/L/M/P/Q=86-670"/>
</dbReference>
<dbReference type="PDB" id="6VZ8">
    <property type="method" value="EM"/>
    <property type="resolution" value="3.45 A"/>
    <property type="chains" value="D/E/H/I/L/M/P/Q=86-670"/>
</dbReference>
<dbReference type="PDB" id="7STQ">
    <property type="method" value="X-ray"/>
    <property type="resolution" value="3.30 A"/>
    <property type="chains" value="A=86-667"/>
</dbReference>
<dbReference type="PDB" id="7TZZ">
    <property type="method" value="X-ray"/>
    <property type="resolution" value="2.59 A"/>
    <property type="chains" value="A=86-667"/>
</dbReference>
<dbReference type="PDB" id="7U1D">
    <property type="method" value="X-ray"/>
    <property type="resolution" value="3.11 A"/>
    <property type="chains" value="A=86-667"/>
</dbReference>
<dbReference type="PDB" id="7U1U">
    <property type="method" value="X-ray"/>
    <property type="resolution" value="3.22 A"/>
    <property type="chains" value="A=86-667"/>
</dbReference>
<dbReference type="PDB" id="7U25">
    <property type="method" value="X-ray"/>
    <property type="resolution" value="3.19 A"/>
    <property type="chains" value="A=86-667"/>
</dbReference>
<dbReference type="PDB" id="8ET4">
    <property type="method" value="X-ray"/>
    <property type="resolution" value="2.95 A"/>
    <property type="chains" value="A=86-667"/>
</dbReference>
<dbReference type="PDB" id="8ET5">
    <property type="method" value="X-ray"/>
    <property type="resolution" value="2.94 A"/>
    <property type="chains" value="A=86-667"/>
</dbReference>
<dbReference type="PDB" id="9C4P">
    <property type="method" value="X-ray"/>
    <property type="resolution" value="2.40 A"/>
    <property type="chains" value="A=86-667"/>
</dbReference>
<dbReference type="PDB" id="9C4Q">
    <property type="method" value="X-ray"/>
    <property type="resolution" value="2.52 A"/>
    <property type="chains" value="A=86-667"/>
</dbReference>
<dbReference type="PDB" id="9C4R">
    <property type="method" value="X-ray"/>
    <property type="resolution" value="2.84 A"/>
    <property type="chains" value="A=86-667"/>
</dbReference>
<dbReference type="PDBsum" id="1YBH"/>
<dbReference type="PDBsum" id="1YHY"/>
<dbReference type="PDBsum" id="1YHZ"/>
<dbReference type="PDBsum" id="1YI0"/>
<dbReference type="PDBsum" id="1YI1"/>
<dbReference type="PDBsum" id="1Z8N"/>
<dbReference type="PDBsum" id="3E9Y"/>
<dbReference type="PDBsum" id="3EA4"/>
<dbReference type="PDBsum" id="5K2O"/>
<dbReference type="PDBsum" id="5K3S"/>
<dbReference type="PDBsum" id="5K6Q"/>
<dbReference type="PDBsum" id="5K6R"/>
<dbReference type="PDBsum" id="5K6T"/>
<dbReference type="PDBsum" id="5WJ1"/>
<dbReference type="PDBsum" id="6U9H"/>
<dbReference type="PDBsum" id="6VZ8"/>
<dbReference type="PDBsum" id="7STQ"/>
<dbReference type="PDBsum" id="7TZZ"/>
<dbReference type="PDBsum" id="7U1D"/>
<dbReference type="PDBsum" id="7U1U"/>
<dbReference type="PDBsum" id="7U25"/>
<dbReference type="PDBsum" id="8ET4"/>
<dbReference type="PDBsum" id="8ET5"/>
<dbReference type="PDBsum" id="9C4P"/>
<dbReference type="PDBsum" id="9C4Q"/>
<dbReference type="PDBsum" id="9C4R"/>
<dbReference type="EMDB" id="EMD-20700"/>
<dbReference type="EMDB" id="EMD-21487"/>
<dbReference type="SMR" id="P17597"/>
<dbReference type="BioGRID" id="9334">
    <property type="interactions" value="1"/>
</dbReference>
<dbReference type="DIP" id="DIP-61092N"/>
<dbReference type="FunCoup" id="P17597">
    <property type="interactions" value="1048"/>
</dbReference>
<dbReference type="STRING" id="3702.P17597"/>
<dbReference type="BindingDB" id="P17597"/>
<dbReference type="ChEMBL" id="CHEMBL4263"/>
<dbReference type="iPTMnet" id="P17597"/>
<dbReference type="MetOSite" id="P17597"/>
<dbReference type="PaxDb" id="3702-AT3G48560.1"/>
<dbReference type="ProteomicsDB" id="228865"/>
<dbReference type="EnsemblPlants" id="AT3G48560.1">
    <property type="protein sequence ID" value="AT3G48560.1"/>
    <property type="gene ID" value="AT3G48560"/>
</dbReference>
<dbReference type="GeneID" id="824015"/>
<dbReference type="Gramene" id="AT3G48560.1">
    <property type="protein sequence ID" value="AT3G48560.1"/>
    <property type="gene ID" value="AT3G48560"/>
</dbReference>
<dbReference type="KEGG" id="ath:AT3G48560"/>
<dbReference type="Araport" id="AT3G48560"/>
<dbReference type="TAIR" id="AT3G48560">
    <property type="gene designation" value="CSR1"/>
</dbReference>
<dbReference type="eggNOG" id="KOG4166">
    <property type="taxonomic scope" value="Eukaryota"/>
</dbReference>
<dbReference type="HOGENOM" id="CLU_013748_1_2_1"/>
<dbReference type="InParanoid" id="P17597"/>
<dbReference type="OMA" id="QETDMIG"/>
<dbReference type="PhylomeDB" id="P17597"/>
<dbReference type="BioCyc" id="ARA:AT3G48560-MONOMER"/>
<dbReference type="BRENDA" id="2.2.1.6">
    <property type="organism ID" value="399"/>
</dbReference>
<dbReference type="SABIO-RK" id="P17597"/>
<dbReference type="UniPathway" id="UPA00047">
    <property type="reaction ID" value="UER00055"/>
</dbReference>
<dbReference type="UniPathway" id="UPA00049">
    <property type="reaction ID" value="UER00059"/>
</dbReference>
<dbReference type="CD-CODE" id="4299E36E">
    <property type="entry name" value="Nucleolus"/>
</dbReference>
<dbReference type="EvolutionaryTrace" id="P17597"/>
<dbReference type="PRO" id="PR:P17597"/>
<dbReference type="Proteomes" id="UP000006548">
    <property type="component" value="Chromosome 3"/>
</dbReference>
<dbReference type="ExpressionAtlas" id="P17597">
    <property type="expression patterns" value="baseline and differential"/>
</dbReference>
<dbReference type="GO" id="GO:0009507">
    <property type="term" value="C:chloroplast"/>
    <property type="evidence" value="ECO:0007005"/>
    <property type="project" value="TAIR"/>
</dbReference>
<dbReference type="GO" id="GO:0009570">
    <property type="term" value="C:chloroplast stroma"/>
    <property type="evidence" value="ECO:0007005"/>
    <property type="project" value="TAIR"/>
</dbReference>
<dbReference type="GO" id="GO:0003984">
    <property type="term" value="F:acetolactate synthase activity"/>
    <property type="evidence" value="ECO:0000314"/>
    <property type="project" value="TAIR"/>
</dbReference>
<dbReference type="GO" id="GO:0050660">
    <property type="term" value="F:flavin adenine dinucleotide binding"/>
    <property type="evidence" value="ECO:0007669"/>
    <property type="project" value="InterPro"/>
</dbReference>
<dbReference type="GO" id="GO:0000287">
    <property type="term" value="F:magnesium ion binding"/>
    <property type="evidence" value="ECO:0007669"/>
    <property type="project" value="InterPro"/>
</dbReference>
<dbReference type="GO" id="GO:0030976">
    <property type="term" value="F:thiamine pyrophosphate binding"/>
    <property type="evidence" value="ECO:0007669"/>
    <property type="project" value="InterPro"/>
</dbReference>
<dbReference type="GO" id="GO:0009097">
    <property type="term" value="P:isoleucine biosynthetic process"/>
    <property type="evidence" value="ECO:0007669"/>
    <property type="project" value="UniProtKB-UniPathway"/>
</dbReference>
<dbReference type="GO" id="GO:0009099">
    <property type="term" value="P:L-valine biosynthetic process"/>
    <property type="evidence" value="ECO:0000314"/>
    <property type="project" value="TAIR"/>
</dbReference>
<dbReference type="GO" id="GO:0009635">
    <property type="term" value="P:response to herbicide"/>
    <property type="evidence" value="ECO:0007669"/>
    <property type="project" value="UniProtKB-KW"/>
</dbReference>
<dbReference type="CDD" id="cd02015">
    <property type="entry name" value="TPP_AHAS"/>
    <property type="match status" value="1"/>
</dbReference>
<dbReference type="CDD" id="cd07035">
    <property type="entry name" value="TPP_PYR_POX_like"/>
    <property type="match status" value="1"/>
</dbReference>
<dbReference type="FunFam" id="3.40.50.1220:FF:000008">
    <property type="entry name" value="Acetolactate synthase"/>
    <property type="match status" value="1"/>
</dbReference>
<dbReference type="FunFam" id="3.40.50.970:FF:000007">
    <property type="entry name" value="Acetolactate synthase"/>
    <property type="match status" value="1"/>
</dbReference>
<dbReference type="FunFam" id="3.40.50.970:FF:000053">
    <property type="entry name" value="Acetolactate synthase, mitochondrial"/>
    <property type="match status" value="1"/>
</dbReference>
<dbReference type="Gene3D" id="3.40.50.970">
    <property type="match status" value="2"/>
</dbReference>
<dbReference type="Gene3D" id="3.40.50.1220">
    <property type="entry name" value="TPP-binding domain"/>
    <property type="match status" value="1"/>
</dbReference>
<dbReference type="InterPro" id="IPR012846">
    <property type="entry name" value="Acetolactate_synth_lsu"/>
</dbReference>
<dbReference type="InterPro" id="IPR039368">
    <property type="entry name" value="AHAS_TPP"/>
</dbReference>
<dbReference type="InterPro" id="IPR029035">
    <property type="entry name" value="DHS-like_NAD/FAD-binding_dom"/>
</dbReference>
<dbReference type="InterPro" id="IPR029061">
    <property type="entry name" value="THDP-binding"/>
</dbReference>
<dbReference type="InterPro" id="IPR012000">
    <property type="entry name" value="Thiamin_PyroP_enz_cen_dom"/>
</dbReference>
<dbReference type="InterPro" id="IPR012001">
    <property type="entry name" value="Thiamin_PyroP_enz_TPP-bd_dom"/>
</dbReference>
<dbReference type="InterPro" id="IPR000399">
    <property type="entry name" value="TPP-bd_CS"/>
</dbReference>
<dbReference type="InterPro" id="IPR045229">
    <property type="entry name" value="TPP_enz"/>
</dbReference>
<dbReference type="InterPro" id="IPR011766">
    <property type="entry name" value="TPP_enzyme_TPP-bd"/>
</dbReference>
<dbReference type="NCBIfam" id="TIGR00118">
    <property type="entry name" value="acolac_lg"/>
    <property type="match status" value="1"/>
</dbReference>
<dbReference type="PANTHER" id="PTHR18968:SF13">
    <property type="entry name" value="ACETOLACTATE SYNTHASE CATALYTIC SUBUNIT, MITOCHONDRIAL"/>
    <property type="match status" value="1"/>
</dbReference>
<dbReference type="PANTHER" id="PTHR18968">
    <property type="entry name" value="THIAMINE PYROPHOSPHATE ENZYMES"/>
    <property type="match status" value="1"/>
</dbReference>
<dbReference type="Pfam" id="PF02775">
    <property type="entry name" value="TPP_enzyme_C"/>
    <property type="match status" value="1"/>
</dbReference>
<dbReference type="Pfam" id="PF00205">
    <property type="entry name" value="TPP_enzyme_M"/>
    <property type="match status" value="1"/>
</dbReference>
<dbReference type="Pfam" id="PF02776">
    <property type="entry name" value="TPP_enzyme_N"/>
    <property type="match status" value="1"/>
</dbReference>
<dbReference type="SUPFAM" id="SSF52467">
    <property type="entry name" value="DHS-like NAD/FAD-binding domain"/>
    <property type="match status" value="1"/>
</dbReference>
<dbReference type="SUPFAM" id="SSF52518">
    <property type="entry name" value="Thiamin diphosphate-binding fold (THDP-binding)"/>
    <property type="match status" value="2"/>
</dbReference>
<dbReference type="PROSITE" id="PS00187">
    <property type="entry name" value="TPP_ENZYMES"/>
    <property type="match status" value="1"/>
</dbReference>
<proteinExistence type="evidence at protein level"/>
<evidence type="ECO:0000255" key="1"/>
<evidence type="ECO:0000256" key="2">
    <source>
        <dbReference type="SAM" id="MobiDB-lite"/>
    </source>
</evidence>
<evidence type="ECO:0000269" key="3">
    <source>
    </source>
</evidence>
<evidence type="ECO:0000269" key="4">
    <source>
    </source>
</evidence>
<evidence type="ECO:0000269" key="5">
    <source>
    </source>
</evidence>
<evidence type="ECO:0000269" key="6">
    <source>
    </source>
</evidence>
<evidence type="ECO:0000269" key="7">
    <source>
    </source>
</evidence>
<evidence type="ECO:0000269" key="8">
    <source>
    </source>
</evidence>
<evidence type="ECO:0000269" key="9">
    <source>
    </source>
</evidence>
<evidence type="ECO:0000269" key="10">
    <source>
    </source>
</evidence>
<evidence type="ECO:0000269" key="11">
    <source>
    </source>
</evidence>
<evidence type="ECO:0000269" key="12">
    <source>
    </source>
</evidence>
<evidence type="ECO:0000269" key="13">
    <source>
    </source>
</evidence>
<evidence type="ECO:0000269" key="14">
    <source>
    </source>
</evidence>
<evidence type="ECO:0000269" key="15">
    <source>
    </source>
</evidence>
<evidence type="ECO:0000269" key="16">
    <source>
    </source>
</evidence>
<evidence type="ECO:0000269" key="17">
    <source>
    </source>
</evidence>
<evidence type="ECO:0000269" key="18">
    <source>
    </source>
</evidence>
<evidence type="ECO:0000269" key="19">
    <source ref="9"/>
</evidence>
<evidence type="ECO:0000305" key="20"/>
<evidence type="ECO:0007744" key="21">
    <source>
        <dbReference type="PDB" id="1YBH"/>
    </source>
</evidence>
<evidence type="ECO:0007744" key="22">
    <source>
        <dbReference type="PDB" id="1YHY"/>
    </source>
</evidence>
<evidence type="ECO:0007744" key="23">
    <source>
        <dbReference type="PDB" id="1YHZ"/>
    </source>
</evidence>
<evidence type="ECO:0007744" key="24">
    <source>
        <dbReference type="PDB" id="1YI0"/>
    </source>
</evidence>
<evidence type="ECO:0007744" key="25">
    <source>
        <dbReference type="PDB" id="1YI1"/>
    </source>
</evidence>
<evidence type="ECO:0007744" key="26">
    <source>
        <dbReference type="PDB" id="1Z8N"/>
    </source>
</evidence>
<evidence type="ECO:0007744" key="27">
    <source>
        <dbReference type="PDB" id="3E9Y"/>
    </source>
</evidence>
<evidence type="ECO:0007744" key="28">
    <source>
        <dbReference type="PDB" id="3EA4"/>
    </source>
</evidence>
<evidence type="ECO:0007744" key="29">
    <source>
        <dbReference type="PDB" id="6U9H"/>
    </source>
</evidence>
<evidence type="ECO:0007744" key="30">
    <source>
        <dbReference type="PDB" id="6VZ8"/>
    </source>
</evidence>
<evidence type="ECO:0007829" key="31">
    <source>
        <dbReference type="PDB" id="1YBH"/>
    </source>
</evidence>
<evidence type="ECO:0007829" key="32">
    <source>
        <dbReference type="PDB" id="5WJ1"/>
    </source>
</evidence>
<evidence type="ECO:0007829" key="33">
    <source>
        <dbReference type="PDB" id="6VZ8"/>
    </source>
</evidence>
<evidence type="ECO:0007829" key="34">
    <source>
        <dbReference type="PDB" id="7TZZ"/>
    </source>
</evidence>
<evidence type="ECO:0007829" key="35">
    <source>
        <dbReference type="PDB" id="7U1D"/>
    </source>
</evidence>
<evidence type="ECO:0007829" key="36">
    <source>
        <dbReference type="PDB" id="7U25"/>
    </source>
</evidence>
<comment type="function">
    <text evidence="3 5 6 7 14 16 17 18 19">Catalyzes the formation of acetolactate from pyruvate, the first step in valine and isoleucine biosynthesis.</text>
</comment>
<comment type="catalytic activity">
    <reaction>
        <text>2 pyruvate + H(+) = (2S)-2-acetolactate + CO2</text>
        <dbReference type="Rhea" id="RHEA:25249"/>
        <dbReference type="ChEBI" id="CHEBI:15361"/>
        <dbReference type="ChEBI" id="CHEBI:15378"/>
        <dbReference type="ChEBI" id="CHEBI:16526"/>
        <dbReference type="ChEBI" id="CHEBI:58476"/>
        <dbReference type="EC" id="2.2.1.6"/>
    </reaction>
</comment>
<comment type="cofactor">
    <cofactor evidence="15">
        <name>Mg(2+)</name>
        <dbReference type="ChEBI" id="CHEBI:18420"/>
    </cofactor>
    <text evidence="15">Binds 1 Mg(2+) ion per subunit.</text>
</comment>
<comment type="cofactor">
    <cofactor evidence="15">
        <name>FAD</name>
        <dbReference type="ChEBI" id="CHEBI:57692"/>
    </cofactor>
</comment>
<comment type="cofactor">
    <cofactor evidence="15">
        <name>thiamine diphosphate</name>
        <dbReference type="ChEBI" id="CHEBI:58937"/>
    </cofactor>
    <text evidence="15">Binds 1 thiamine pyrophosphate per subunit.</text>
</comment>
<comment type="activity regulation">
    <text evidence="9 10 11 13 17">Inhibited by asymmetric aryl disulfides, triazolopyrimidine sulfonanilide compounds, isatin derivatives, and sulfonylurea and imidazolinone herbicides. Insensitive to feed-back inhibition by branched-chain amino acids.</text>
</comment>
<comment type="biophysicochemical properties">
    <phDependence>
        <text evidence="17 18">Optimum pH is 7.0-7.5.</text>
    </phDependence>
</comment>
<comment type="pathway">
    <text>Amino-acid biosynthesis; L-isoleucine biosynthesis; L-isoleucine from 2-oxobutanoate: step 1/4.</text>
</comment>
<comment type="pathway">
    <text>Amino-acid biosynthesis; L-valine biosynthesis; L-valine from pyruvate: step 1/4.</text>
</comment>
<comment type="subunit">
    <text evidence="4 8 15 17">Homodimer or homotetramer. The acetolactate synthase complex contains both large catalytic subunits and small regulatory subunits (PubMed:16407096, PubMed:19187232, PubMed:9355748). Homodimer (PubMed:32640464). The acetolactate synthase complex contains 4 homodimers of the large catalytic subunits, and 1 homotetramer of the small regulatory subunits (PubMed:32640464).</text>
</comment>
<comment type="subcellular location">
    <subcellularLocation>
        <location evidence="20">Plastid</location>
        <location evidence="20">Chloroplast</location>
    </subcellularLocation>
</comment>
<comment type="disruption phenotype">
    <text evidence="12">Lethal when homozygous.</text>
</comment>
<comment type="biotechnology">
    <text>Introduced by genetic manipulation and expressed in sulfonylurea resistant plants.</text>
</comment>
<comment type="similarity">
    <text evidence="20">Belongs to the TPP enzyme family.</text>
</comment>
<feature type="transit peptide" description="Chloroplast" evidence="1">
    <location>
        <begin position="1"/>
        <end position="55"/>
    </location>
</feature>
<feature type="chain" id="PRO_0000035655" description="Acetolactate synthase, chloroplastic">
    <location>
        <begin position="56"/>
        <end position="670"/>
    </location>
</feature>
<feature type="region of interest" description="Disordered" evidence="2">
    <location>
        <begin position="1"/>
        <end position="94"/>
    </location>
</feature>
<feature type="coiled-coil region" evidence="1">
    <location>
        <begin position="414"/>
        <end position="446"/>
    </location>
</feature>
<feature type="compositionally biased region" description="Low complexity" evidence="2">
    <location>
        <begin position="1"/>
        <end position="48"/>
    </location>
</feature>
<feature type="compositionally biased region" description="Low complexity" evidence="2">
    <location>
        <begin position="55"/>
        <end position="77"/>
    </location>
</feature>
<feature type="binding site" evidence="4">
    <location>
        <position position="144"/>
    </location>
    <ligand>
        <name>thiamine diphosphate</name>
        <dbReference type="ChEBI" id="CHEBI:58937"/>
    </ligand>
</feature>
<feature type="binding site" evidence="15 29">
    <location>
        <position position="186"/>
    </location>
    <ligand>
        <name>FAD</name>
        <dbReference type="ChEBI" id="CHEBI:57692"/>
    </ligand>
</feature>
<feature type="binding site" evidence="4">
    <location>
        <position position="207"/>
    </location>
    <ligand>
        <name>thiamine diphosphate</name>
        <dbReference type="ChEBI" id="CHEBI:58937"/>
    </ligand>
</feature>
<feature type="binding site" evidence="4 26">
    <location>
        <position position="220"/>
    </location>
    <ligand>
        <name>(R)-imazaquin</name>
        <dbReference type="ChEBI" id="CHEBI:147373"/>
        <note>inhibitor; imidazolinone herbicide</note>
    </ligand>
</feature>
<feature type="binding site" evidence="4 26">
    <location>
        <position position="246"/>
    </location>
    <ligand>
        <name>(R)-imazaquin</name>
        <dbReference type="ChEBI" id="CHEBI:147373"/>
        <note>inhibitor; imidazolinone herbicide</note>
    </ligand>
</feature>
<feature type="binding site" evidence="4">
    <location>
        <position position="246"/>
    </location>
    <ligand>
        <name>FAD</name>
        <dbReference type="ChEBI" id="CHEBI:57692"/>
    </ligand>
</feature>
<feature type="binding site" evidence="4 21">
    <location>
        <position position="256"/>
    </location>
    <ligand>
        <name>chlorimuron-ethyl</name>
        <dbReference type="ChEBI" id="CHEBI:188144"/>
        <note>inhibitor; sulfonylurea herbicide</note>
    </ligand>
</feature>
<feature type="binding site" evidence="4 15 29">
    <location>
        <position position="308"/>
    </location>
    <ligand>
        <name>FAD</name>
        <dbReference type="ChEBI" id="CHEBI:57692"/>
    </ligand>
</feature>
<feature type="binding site" evidence="4 15 29">
    <location>
        <begin position="331"/>
        <end position="332"/>
    </location>
    <ligand>
        <name>FAD</name>
        <dbReference type="ChEBI" id="CHEBI:57692"/>
    </ligand>
</feature>
<feature type="binding site" evidence="4 15 29">
    <location>
        <begin position="349"/>
        <end position="352"/>
    </location>
    <ligand>
        <name>FAD</name>
        <dbReference type="ChEBI" id="CHEBI:57692"/>
    </ligand>
</feature>
<feature type="binding site" evidence="4 15 29">
    <location>
        <begin position="371"/>
        <end position="375"/>
    </location>
    <ligand>
        <name>FAD</name>
        <dbReference type="ChEBI" id="CHEBI:57692"/>
    </ligand>
</feature>
<feature type="binding site" evidence="4 21">
    <location>
        <begin position="376"/>
        <end position="377"/>
    </location>
    <ligand>
        <name>chlorimuron-ethyl</name>
        <dbReference type="ChEBI" id="CHEBI:188144"/>
        <note>inhibitor; sulfonylurea herbicide</note>
    </ligand>
</feature>
<feature type="binding site" evidence="4 15 29">
    <location>
        <begin position="395"/>
        <end position="396"/>
    </location>
    <ligand>
        <name>FAD</name>
        <dbReference type="ChEBI" id="CHEBI:57692"/>
    </ligand>
</feature>
<feature type="binding site" evidence="4">
    <location>
        <begin position="414"/>
        <end position="415"/>
    </location>
    <ligand>
        <name>FAD</name>
        <dbReference type="ChEBI" id="CHEBI:57692"/>
    </ligand>
</feature>
<feature type="binding site" evidence="15 29">
    <location>
        <begin position="487"/>
        <end position="488"/>
    </location>
    <ligand>
        <name>thiamine diphosphate</name>
        <dbReference type="ChEBI" id="CHEBI:58937"/>
    </ligand>
</feature>
<feature type="binding site" evidence="4 15 29">
    <location>
        <begin position="508"/>
        <end position="509"/>
    </location>
    <ligand>
        <name>FAD</name>
        <dbReference type="ChEBI" id="CHEBI:57692"/>
    </ligand>
</feature>
<feature type="binding site" evidence="15 30">
    <location>
        <begin position="511"/>
        <end position="513"/>
    </location>
    <ligand>
        <name>thiamine diphosphate</name>
        <dbReference type="ChEBI" id="CHEBI:58937"/>
    </ligand>
</feature>
<feature type="binding site" evidence="15 29">
    <location>
        <begin position="538"/>
        <end position="540"/>
    </location>
    <ligand>
        <name>thiamine diphosphate</name>
        <dbReference type="ChEBI" id="CHEBI:58937"/>
    </ligand>
</feature>
<feature type="binding site" evidence="4 8 15 29">
    <location>
        <position position="538"/>
    </location>
    <ligand>
        <name>Mg(2+)</name>
        <dbReference type="ChEBI" id="CHEBI:18420"/>
    </ligand>
</feature>
<feature type="binding site" evidence="15 29">
    <location>
        <begin position="565"/>
        <end position="570"/>
    </location>
    <ligand>
        <name>thiamine diphosphate</name>
        <dbReference type="ChEBI" id="CHEBI:58937"/>
    </ligand>
</feature>
<feature type="binding site" evidence="4 8">
    <location>
        <position position="565"/>
    </location>
    <ligand>
        <name>Mg(2+)</name>
        <dbReference type="ChEBI" id="CHEBI:18420"/>
    </ligand>
</feature>
<feature type="binding site" evidence="4 8 15 30">
    <location>
        <position position="567"/>
    </location>
    <ligand>
        <name>Mg(2+)</name>
        <dbReference type="ChEBI" id="CHEBI:18420"/>
    </ligand>
</feature>
<feature type="binding site" evidence="4 21">
    <location>
        <position position="574"/>
    </location>
    <ligand>
        <name>chlorimuron-ethyl</name>
        <dbReference type="ChEBI" id="CHEBI:188144"/>
        <note>inhibitor; sulfonylurea herbicide</note>
    </ligand>
</feature>
<feature type="binding site" evidence="4 21">
    <location>
        <position position="653"/>
    </location>
    <ligand>
        <name>chlorimuron-ethyl</name>
        <dbReference type="ChEBI" id="CHEBI:188144"/>
        <note>inhibitor; sulfonylurea herbicide</note>
    </ligand>
</feature>
<feature type="modified residue" description="Cysteine sulfinic acid (-SO2H)" evidence="4 8">
    <location>
        <position position="340"/>
    </location>
</feature>
<feature type="mutagenesis site" description="Reduced catalytic activity. Resistant to imidazolinone herbicides but not to sulfonylurea herbicides." evidence="18">
    <original>A</original>
    <variation>V</variation>
    <location>
        <position position="122"/>
    </location>
</feature>
<feature type="mutagenesis site" description="Reduced catalytic activity. Resistant to imidazolinone herbicides and reduced sensitivity to sulfonylurea herbicides." evidence="16">
    <original>M</original>
    <variation>E</variation>
    <location>
        <position position="124"/>
    </location>
</feature>
<feature type="mutagenesis site" description="No effect on catalytic activity. Increased resistance to imidazolinone herbicides." evidence="16">
    <original>M</original>
    <variation>I</variation>
    <location>
        <position position="124"/>
    </location>
</feature>
<feature type="mutagenesis site" description="In csr1-1/GH50; resistant to sulfonylurea but not to imidazolinone herbicides." evidence="19">
    <original>P</original>
    <variation>S</variation>
    <location>
        <position position="197"/>
    </location>
</feature>
<feature type="mutagenesis site" description="No effect on catalytic activity. Resistant to imidazolinone herbicides but not to sulfonylurea herbicides." evidence="16">
    <original>R</original>
    <variation>A</variation>
    <variation>E</variation>
    <location>
        <position position="199"/>
    </location>
</feature>
<feature type="mutagenesis site" description="Increased catalytic activity. Resistant to imidazolinone and sulfonylurea herbicides." evidence="18">
    <original>W</original>
    <variation>L</variation>
    <location>
        <position position="574"/>
    </location>
</feature>
<feature type="mutagenesis site" description="Slightly decreased catalytic activity. Resistant to imidazolinone and sulfonylurea herbicides." evidence="18">
    <original>W</original>
    <variation>S</variation>
    <location>
        <position position="574"/>
    </location>
</feature>
<feature type="mutagenesis site" description="No effect on catalytic activity or sensitivity to herbicides." evidence="3 7 14 18">
    <original>S</original>
    <variation>A</variation>
    <location>
        <position position="653"/>
    </location>
</feature>
<feature type="mutagenesis site" description="No effect on catalytic activity. Resistant to imidazolinone herbicides and also slightly sulfonylurea-resistant." evidence="3 7 14 18">
    <original>S</original>
    <variation>F</variation>
    <location>
        <position position="653"/>
    </location>
</feature>
<feature type="mutagenesis site" description="In csr1-2/GH90; no effect on catalytic activity. Resistant to imidazolinone but not to sulfonylurea herbicides." evidence="3 7 14 18">
    <original>S</original>
    <variation>N</variation>
    <location>
        <position position="653"/>
    </location>
</feature>
<feature type="mutagenesis site" description="No effect on catalytic activity. Resistant to imidazolinone herbicides but not to sulfonylurea herbicides." evidence="3 7 14 18">
    <original>S</original>
    <variation>T</variation>
    <location>
        <position position="653"/>
    </location>
</feature>
<feature type="sequence conflict" description="In Ref. 8; ABJ80681." evidence="20" ref="8">
    <original>V</original>
    <variation>A</variation>
    <location>
        <position position="104"/>
    </location>
</feature>
<feature type="sequence conflict" description="In Ref. 8; ABJ80681." evidence="20" ref="8">
    <original>P</original>
    <variation>S</variation>
    <location>
        <position position="161"/>
    </location>
</feature>
<feature type="sequence conflict" description="In Ref. 8; ABJ80681." evidence="20" ref="8">
    <original>E</original>
    <variation>G</variation>
    <location>
        <position position="208"/>
    </location>
</feature>
<feature type="sequence conflict" description="In Ref. 8; ABJ80681." evidence="20" ref="8">
    <original>Y</original>
    <variation>H</variation>
    <location>
        <position position="466"/>
    </location>
</feature>
<feature type="sequence conflict" description="In Ref. 5; AAM92569." evidence="20" ref="5">
    <original>N</original>
    <variation>Q</variation>
    <location>
        <position position="555"/>
    </location>
</feature>
<feature type="sequence conflict" description="In Ref. 5; AAM92569." evidence="20" ref="5">
    <original>V</original>
    <variation>I</variation>
    <location>
        <position position="560"/>
    </location>
</feature>
<feature type="sequence conflict" description="In Ref. 6; AAK68759." evidence="20" ref="6">
    <original>E</original>
    <variation>Q</variation>
    <location>
        <position position="575"/>
    </location>
</feature>
<feature type="helix" evidence="31">
    <location>
        <begin position="99"/>
        <end position="108"/>
    </location>
</feature>
<feature type="turn" evidence="31">
    <location>
        <begin position="109"/>
        <end position="111"/>
    </location>
</feature>
<feature type="strand" evidence="31">
    <location>
        <begin position="114"/>
        <end position="117"/>
    </location>
</feature>
<feature type="helix" evidence="31">
    <location>
        <begin position="121"/>
        <end position="123"/>
    </location>
</feature>
<feature type="helix" evidence="31">
    <location>
        <begin position="124"/>
        <end position="132"/>
    </location>
</feature>
<feature type="strand" evidence="34">
    <location>
        <begin position="137"/>
        <end position="139"/>
    </location>
</feature>
<feature type="helix" evidence="31">
    <location>
        <begin position="144"/>
        <end position="158"/>
    </location>
</feature>
<feature type="strand" evidence="31">
    <location>
        <begin position="162"/>
        <end position="166"/>
    </location>
</feature>
<feature type="helix" evidence="31">
    <location>
        <begin position="170"/>
        <end position="173"/>
    </location>
</feature>
<feature type="helix" evidence="31">
    <location>
        <begin position="176"/>
        <end position="185"/>
    </location>
</feature>
<feature type="strand" evidence="31">
    <location>
        <begin position="189"/>
        <end position="195"/>
    </location>
</feature>
<feature type="helix" evidence="31">
    <location>
        <begin position="198"/>
        <end position="200"/>
    </location>
</feature>
<feature type="turn" evidence="31">
    <location>
        <begin position="201"/>
        <end position="204"/>
    </location>
</feature>
<feature type="helix" evidence="31">
    <location>
        <begin position="211"/>
        <end position="215"/>
    </location>
</feature>
<feature type="helix" evidence="31">
    <location>
        <begin position="216"/>
        <end position="218"/>
    </location>
</feature>
<feature type="strand" evidence="31">
    <location>
        <begin position="219"/>
        <end position="224"/>
    </location>
</feature>
<feature type="helix" evidence="31">
    <location>
        <begin position="228"/>
        <end position="230"/>
    </location>
</feature>
<feature type="helix" evidence="31">
    <location>
        <begin position="231"/>
        <end position="243"/>
    </location>
</feature>
<feature type="strand" evidence="31">
    <location>
        <begin position="244"/>
        <end position="246"/>
    </location>
</feature>
<feature type="strand" evidence="31">
    <location>
        <begin position="249"/>
        <end position="255"/>
    </location>
</feature>
<feature type="helix" evidence="31">
    <location>
        <begin position="256"/>
        <end position="260"/>
    </location>
</feature>
<feature type="strand" evidence="35">
    <location>
        <begin position="261"/>
        <end position="263"/>
    </location>
</feature>
<feature type="helix" evidence="31">
    <location>
        <begin position="274"/>
        <end position="279"/>
    </location>
</feature>
<feature type="helix" evidence="31">
    <location>
        <begin position="286"/>
        <end position="298"/>
    </location>
</feature>
<feature type="strand" evidence="31">
    <location>
        <begin position="300"/>
        <end position="306"/>
    </location>
</feature>
<feature type="helix" evidence="31">
    <location>
        <begin position="308"/>
        <end position="310"/>
    </location>
</feature>
<feature type="helix" evidence="36">
    <location>
        <begin position="311"/>
        <end position="313"/>
    </location>
</feature>
<feature type="helix" evidence="31">
    <location>
        <begin position="314"/>
        <end position="324"/>
    </location>
</feature>
<feature type="strand" evidence="31">
    <location>
        <begin position="328"/>
        <end position="330"/>
    </location>
</feature>
<feature type="turn" evidence="31">
    <location>
        <begin position="332"/>
        <end position="336"/>
    </location>
</feature>
<feature type="strand" evidence="34">
    <location>
        <begin position="340"/>
        <end position="342"/>
    </location>
</feature>
<feature type="strand" evidence="31">
    <location>
        <begin position="345"/>
        <end position="348"/>
    </location>
</feature>
<feature type="helix" evidence="31">
    <location>
        <begin position="355"/>
        <end position="363"/>
    </location>
</feature>
<feature type="strand" evidence="31">
    <location>
        <begin position="365"/>
        <end position="371"/>
    </location>
</feature>
<feature type="helix" evidence="31">
    <location>
        <begin position="376"/>
        <end position="379"/>
    </location>
</feature>
<feature type="helix" evidence="31">
    <location>
        <begin position="382"/>
        <end position="384"/>
    </location>
</feature>
<feature type="turn" evidence="31">
    <location>
        <begin position="385"/>
        <end position="388"/>
    </location>
</feature>
<feature type="strand" evidence="31">
    <location>
        <begin position="389"/>
        <end position="396"/>
    </location>
</feature>
<feature type="turn" evidence="31">
    <location>
        <begin position="398"/>
        <end position="402"/>
    </location>
</feature>
<feature type="strand" evidence="31">
    <location>
        <begin position="403"/>
        <end position="405"/>
    </location>
</feature>
<feature type="strand" evidence="31">
    <location>
        <begin position="408"/>
        <end position="413"/>
    </location>
</feature>
<feature type="helix" evidence="31">
    <location>
        <begin position="415"/>
        <end position="428"/>
    </location>
</feature>
<feature type="helix" evidence="31">
    <location>
        <begin position="430"/>
        <end position="433"/>
    </location>
</feature>
<feature type="helix" evidence="31">
    <location>
        <begin position="438"/>
        <end position="450"/>
    </location>
</feature>
<feature type="helix" evidence="31">
    <location>
        <begin position="464"/>
        <end position="475"/>
    </location>
</feature>
<feature type="strand" evidence="31">
    <location>
        <begin position="480"/>
        <end position="483"/>
    </location>
</feature>
<feature type="helix" evidence="31">
    <location>
        <begin position="487"/>
        <end position="494"/>
    </location>
</feature>
<feature type="strand" evidence="36">
    <location>
        <begin position="500"/>
        <end position="502"/>
    </location>
</feature>
<feature type="strand" evidence="31">
    <location>
        <begin position="503"/>
        <end position="505"/>
    </location>
</feature>
<feature type="strand" evidence="33">
    <location>
        <begin position="508"/>
        <end position="510"/>
    </location>
</feature>
<feature type="helix" evidence="31">
    <location>
        <begin position="516"/>
        <end position="526"/>
    </location>
</feature>
<feature type="strand" evidence="31">
    <location>
        <begin position="532"/>
        <end position="537"/>
    </location>
</feature>
<feature type="helix" evidence="31">
    <location>
        <begin position="538"/>
        <end position="543"/>
    </location>
</feature>
<feature type="helix" evidence="31">
    <location>
        <begin position="544"/>
        <end position="546"/>
    </location>
</feature>
<feature type="helix" evidence="31">
    <location>
        <begin position="547"/>
        <end position="553"/>
    </location>
</feature>
<feature type="strand" evidence="31">
    <location>
        <begin position="558"/>
        <end position="564"/>
    </location>
</feature>
<feature type="helix" evidence="31">
    <location>
        <begin position="569"/>
        <end position="578"/>
    </location>
</feature>
<feature type="helix" evidence="31">
    <location>
        <begin position="591"/>
        <end position="593"/>
    </location>
</feature>
<feature type="helix" evidence="31">
    <location>
        <begin position="601"/>
        <end position="607"/>
    </location>
</feature>
<feature type="strand" evidence="31">
    <location>
        <begin position="612"/>
        <end position="615"/>
    </location>
</feature>
<feature type="helix" evidence="31">
    <location>
        <begin position="618"/>
        <end position="630"/>
    </location>
</feature>
<feature type="strand" evidence="31">
    <location>
        <begin position="631"/>
        <end position="633"/>
    </location>
</feature>
<feature type="strand" evidence="31">
    <location>
        <begin position="635"/>
        <end position="640"/>
    </location>
</feature>
<feature type="strand" evidence="32">
    <location>
        <begin position="648"/>
        <end position="650"/>
    </location>
</feature>
<feature type="helix" evidence="31">
    <location>
        <begin position="657"/>
        <end position="659"/>
    </location>
</feature>
<gene>
    <name type="primary">ALS</name>
    <name type="synonym">AHAS</name>
    <name type="synonym">CSR1</name>
    <name type="synonym">TZP5</name>
    <name type="ordered locus">At3g48560</name>
    <name type="ORF">T8P19.70</name>
</gene>
<accession>P17597</accession>
<accession>A0A174</accession>
<accession>Q5FV34</accession>
<accession>Q8L7Y7</accession>
<accession>Q94B64</accession>
<name>ILVB_ARATH</name>
<sequence length="670" mass="72585">MAAATTTTTTSSSISFSTKPSPSSSKSPLPISRFSLPFSLNPNKSSSSSRRRGIKSSSPSSISAVLNTTTNVTTTPSPTKPTKPETFISRFAPDQPRKGADILVEALERQGVETVFAYPGGASMEIHQALTRSSSIRNVLPRHEQGGVFAAEGYARSSGKPGICIATSGPGATNLVSGLADALLDSVPLVAITGQVPRRMIGTDAFQETPIVEVTRSITKHNYLVMDVEDIPRIIEEAFFLATSGRPGPVLVDVPKDIQQQLAIPNWEQAMRLPGYMSRMPKPPEDSHLEQIVRLISESKKPVLYVGGGCLNSSDELGRFVELTGIPVASTLMGLGSYPCDDELSLHMLGMHGTVYANYAVEHSDLLLAFGVRFDDRVTGKLEAFASRAKIVHIDIDSAEIGKNKTPHVSVCGDVKLALQGMNKVLENRAEELKLDFGVWRNELNVQKQKFPLSFKTFGEAIPPQYAIKVLDELTDGKAIISTGVGQHQMWAAQFYNYKKPRQWLSSGGLGAMGFGLPAAIGASVANPDAIVVDIDGDGSFIMNVQELATIRVENLPVKVLLLNNQHLGMVMQWEDRFYKANRAHTFLGDPAQEDEIFPNMLLFAAACGIPAARVTKKADLREAIQTMLDTPGPYLLDVICPHQEHVLPMIPSGGTFNDVITEGDGRIKY</sequence>